<dbReference type="EMBL" id="Z48432">
    <property type="protein sequence ID" value="CAA88341.1"/>
    <property type="molecule type" value="Genomic_DNA"/>
</dbReference>
<dbReference type="EMBL" id="Z74066">
    <property type="protein sequence ID" value="CAA98576.1"/>
    <property type="molecule type" value="Genomic_DNA"/>
</dbReference>
<dbReference type="EMBL" id="BK006938">
    <property type="protein sequence ID" value="DAA11832.1"/>
    <property type="molecule type" value="Genomic_DNA"/>
</dbReference>
<dbReference type="PIR" id="S52501">
    <property type="entry name" value="S52501"/>
</dbReference>
<dbReference type="RefSeq" id="NP_010266.1">
    <property type="nucleotide sequence ID" value="NM_001180077.1"/>
</dbReference>
<dbReference type="SMR" id="Q12403"/>
<dbReference type="BioGRID" id="32037">
    <property type="interactions" value="131"/>
</dbReference>
<dbReference type="FunCoup" id="Q12403">
    <property type="interactions" value="103"/>
</dbReference>
<dbReference type="IntAct" id="Q12403">
    <property type="interactions" value="7"/>
</dbReference>
<dbReference type="MINT" id="Q12403"/>
<dbReference type="STRING" id="4932.YDL018C"/>
<dbReference type="iPTMnet" id="Q12403"/>
<dbReference type="PaxDb" id="4932-YDL018C"/>
<dbReference type="PeptideAtlas" id="Q12403"/>
<dbReference type="EnsemblFungi" id="YDL018C_mRNA">
    <property type="protein sequence ID" value="YDL018C"/>
    <property type="gene ID" value="YDL018C"/>
</dbReference>
<dbReference type="GeneID" id="851544"/>
<dbReference type="KEGG" id="sce:YDL018C"/>
<dbReference type="AGR" id="SGD:S000002176"/>
<dbReference type="SGD" id="S000002176">
    <property type="gene designation" value="ERP3"/>
</dbReference>
<dbReference type="VEuPathDB" id="FungiDB:YDL018C"/>
<dbReference type="eggNOG" id="KOG1693">
    <property type="taxonomic scope" value="Eukaryota"/>
</dbReference>
<dbReference type="HOGENOM" id="CLU_066963_4_2_1"/>
<dbReference type="InParanoid" id="Q12403"/>
<dbReference type="OMA" id="CTISYYF"/>
<dbReference type="OrthoDB" id="1929172at2759"/>
<dbReference type="BioCyc" id="YEAST:G3O-29447-MONOMER"/>
<dbReference type="Reactome" id="R-SCE-6807878">
    <property type="pathway name" value="COPI-mediated anterograde transport"/>
</dbReference>
<dbReference type="Reactome" id="R-SCE-6811434">
    <property type="pathway name" value="COPI-dependent Golgi-to-ER retrograde traffic"/>
</dbReference>
<dbReference type="BioGRID-ORCS" id="851544">
    <property type="hits" value="7 hits in 10 CRISPR screens"/>
</dbReference>
<dbReference type="PRO" id="PR:Q12403"/>
<dbReference type="Proteomes" id="UP000002311">
    <property type="component" value="Chromosome IV"/>
</dbReference>
<dbReference type="RNAct" id="Q12403">
    <property type="molecule type" value="protein"/>
</dbReference>
<dbReference type="GO" id="GO:0030134">
    <property type="term" value="C:COPII-coated ER to Golgi transport vesicle"/>
    <property type="evidence" value="ECO:0000318"/>
    <property type="project" value="GO_Central"/>
</dbReference>
<dbReference type="GO" id="GO:0005783">
    <property type="term" value="C:endoplasmic reticulum"/>
    <property type="evidence" value="ECO:0007005"/>
    <property type="project" value="SGD"/>
</dbReference>
<dbReference type="GO" id="GO:0005789">
    <property type="term" value="C:endoplasmic reticulum membrane"/>
    <property type="evidence" value="ECO:0007669"/>
    <property type="project" value="UniProtKB-SubCell"/>
</dbReference>
<dbReference type="GO" id="GO:0005793">
    <property type="term" value="C:endoplasmic reticulum-Golgi intermediate compartment"/>
    <property type="evidence" value="ECO:0000318"/>
    <property type="project" value="GO_Central"/>
</dbReference>
<dbReference type="GO" id="GO:0005794">
    <property type="term" value="C:Golgi apparatus"/>
    <property type="evidence" value="ECO:0000318"/>
    <property type="project" value="GO_Central"/>
</dbReference>
<dbReference type="GO" id="GO:0016020">
    <property type="term" value="C:membrane"/>
    <property type="evidence" value="ECO:0000255"/>
    <property type="project" value="SGD"/>
</dbReference>
<dbReference type="GO" id="GO:0006888">
    <property type="term" value="P:endoplasmic reticulum to Golgi vesicle-mediated transport"/>
    <property type="evidence" value="ECO:0000318"/>
    <property type="project" value="GO_Central"/>
</dbReference>
<dbReference type="GO" id="GO:0007030">
    <property type="term" value="P:Golgi organization"/>
    <property type="evidence" value="ECO:0000318"/>
    <property type="project" value="GO_Central"/>
</dbReference>
<dbReference type="GO" id="GO:0006886">
    <property type="term" value="P:intracellular protein transport"/>
    <property type="evidence" value="ECO:0000318"/>
    <property type="project" value="GO_Central"/>
</dbReference>
<dbReference type="GO" id="GO:0006621">
    <property type="term" value="P:protein retention in ER lumen"/>
    <property type="evidence" value="ECO:0000318"/>
    <property type="project" value="GO_Central"/>
</dbReference>
<dbReference type="GO" id="GO:0016192">
    <property type="term" value="P:vesicle-mediated transport"/>
    <property type="evidence" value="ECO:0000247"/>
    <property type="project" value="SGD"/>
</dbReference>
<dbReference type="InterPro" id="IPR015720">
    <property type="entry name" value="Emp24-like"/>
</dbReference>
<dbReference type="InterPro" id="IPR009038">
    <property type="entry name" value="GOLD_dom"/>
</dbReference>
<dbReference type="PANTHER" id="PTHR22811">
    <property type="entry name" value="TRANSMEMBRANE EMP24 DOMAIN-CONTAINING PROTEIN"/>
    <property type="match status" value="1"/>
</dbReference>
<dbReference type="Pfam" id="PF01105">
    <property type="entry name" value="EMP24_GP25L"/>
    <property type="match status" value="1"/>
</dbReference>
<dbReference type="SMART" id="SM01190">
    <property type="entry name" value="EMP24_GP25L"/>
    <property type="match status" value="1"/>
</dbReference>
<dbReference type="PROSITE" id="PS50866">
    <property type="entry name" value="GOLD"/>
    <property type="match status" value="1"/>
</dbReference>
<protein>
    <recommendedName>
        <fullName>Protein ERP3</fullName>
    </recommendedName>
</protein>
<keyword id="KW-0256">Endoplasmic reticulum</keyword>
<keyword id="KW-0931">ER-Golgi transport</keyword>
<keyword id="KW-0472">Membrane</keyword>
<keyword id="KW-0653">Protein transport</keyword>
<keyword id="KW-1185">Reference proteome</keyword>
<keyword id="KW-0732">Signal</keyword>
<keyword id="KW-0812">Transmembrane</keyword>
<keyword id="KW-1133">Transmembrane helix</keyword>
<keyword id="KW-0813">Transport</keyword>
<organism>
    <name type="scientific">Saccharomyces cerevisiae (strain ATCC 204508 / S288c)</name>
    <name type="common">Baker's yeast</name>
    <dbReference type="NCBI Taxonomy" id="559292"/>
    <lineage>
        <taxon>Eukaryota</taxon>
        <taxon>Fungi</taxon>
        <taxon>Dikarya</taxon>
        <taxon>Ascomycota</taxon>
        <taxon>Saccharomycotina</taxon>
        <taxon>Saccharomycetes</taxon>
        <taxon>Saccharomycetales</taxon>
        <taxon>Saccharomycetaceae</taxon>
        <taxon>Saccharomyces</taxon>
    </lineage>
</organism>
<evidence type="ECO:0000250" key="1"/>
<evidence type="ECO:0000255" key="2"/>
<evidence type="ECO:0000255" key="3">
    <source>
        <dbReference type="PROSITE-ProRule" id="PRU00096"/>
    </source>
</evidence>
<evidence type="ECO:0000256" key="4">
    <source>
        <dbReference type="SAM" id="MobiDB-lite"/>
    </source>
</evidence>
<evidence type="ECO:0000269" key="5">
    <source>
    </source>
</evidence>
<evidence type="ECO:0000305" key="6"/>
<comment type="function">
    <text evidence="1">Involved in vesicular protein trafficking.</text>
</comment>
<comment type="subcellular location">
    <subcellularLocation>
        <location evidence="1">Endoplasmic reticulum membrane</location>
        <topology evidence="1">Single-pass type I membrane protein</topology>
    </subcellularLocation>
</comment>
<comment type="miscellaneous">
    <text evidence="5">Present with 3190 molecules/cell in log phase SD medium.</text>
</comment>
<comment type="similarity">
    <text evidence="6">Belongs to the EMP24/GP25L family.</text>
</comment>
<name>ERP3_YEAST</name>
<accession>Q12403</accession>
<accession>D6VRX2</accession>
<gene>
    <name type="primary">ERP3</name>
    <name type="ordered locus">YDL018C</name>
    <name type="ORF">D2850</name>
</gene>
<proteinExistence type="evidence at protein level"/>
<feature type="signal peptide" evidence="2">
    <location>
        <begin position="1"/>
        <end position="23"/>
    </location>
</feature>
<feature type="chain" id="PRO_0000010410" description="Protein ERP3">
    <location>
        <begin position="24"/>
        <end position="225"/>
    </location>
</feature>
<feature type="topological domain" description="Lumenal" evidence="2">
    <location>
        <begin position="24"/>
        <end position="195"/>
    </location>
</feature>
<feature type="transmembrane region" description="Helical" evidence="2">
    <location>
        <begin position="196"/>
        <end position="216"/>
    </location>
</feature>
<feature type="topological domain" description="Cytoplasmic" evidence="2">
    <location>
        <begin position="217"/>
        <end position="225"/>
    </location>
</feature>
<feature type="domain" description="GOLD" evidence="3">
    <location>
        <begin position="33"/>
        <end position="172"/>
    </location>
</feature>
<feature type="region of interest" description="Disordered" evidence="4">
    <location>
        <begin position="129"/>
        <end position="149"/>
    </location>
</feature>
<feature type="compositionally biased region" description="Basic residues" evidence="4">
    <location>
        <begin position="129"/>
        <end position="138"/>
    </location>
</feature>
<sequence length="225" mass="26511">MSNLCVLFFQFFFLAQFFAEASPLTFELNKGRKECLYTLTPEIDCTISYYFAVQQGESNDFDVNYEIFAPDDKNKPIIERSGERQGEWSFIGQHKGEYAICFYGGKAHDKIVDLDFKYNCERQDDIRNERRKARKAQRNLRDSKTDPLQDSVENSIDTIERQLHVLERNIQYYKSRNTRNHHTVCSTEHRIVMFSIYGILLIIGMSCAQIAILEFIFRESRKHNV</sequence>
<reference key="1">
    <citation type="journal article" date="1997" name="Nature">
        <title>The nucleotide sequence of Saccharomyces cerevisiae chromosome IV.</title>
        <authorList>
            <person name="Jacq C."/>
            <person name="Alt-Moerbe J."/>
            <person name="Andre B."/>
            <person name="Arnold W."/>
            <person name="Bahr A."/>
            <person name="Ballesta J.P.G."/>
            <person name="Bargues M."/>
            <person name="Baron L."/>
            <person name="Becker A."/>
            <person name="Biteau N."/>
            <person name="Bloecker H."/>
            <person name="Blugeon C."/>
            <person name="Boskovic J."/>
            <person name="Brandt P."/>
            <person name="Brueckner M."/>
            <person name="Buitrago M.J."/>
            <person name="Coster F."/>
            <person name="Delaveau T."/>
            <person name="del Rey F."/>
            <person name="Dujon B."/>
            <person name="Eide L.G."/>
            <person name="Garcia-Cantalejo J.M."/>
            <person name="Goffeau A."/>
            <person name="Gomez-Peris A."/>
            <person name="Granotier C."/>
            <person name="Hanemann V."/>
            <person name="Hankeln T."/>
            <person name="Hoheisel J.D."/>
            <person name="Jaeger W."/>
            <person name="Jimenez A."/>
            <person name="Jonniaux J.-L."/>
            <person name="Kraemer C."/>
            <person name="Kuester H."/>
            <person name="Laamanen P."/>
            <person name="Legros Y."/>
            <person name="Louis E.J."/>
            <person name="Moeller-Rieker S."/>
            <person name="Monnet A."/>
            <person name="Moro M."/>
            <person name="Mueller-Auer S."/>
            <person name="Nussbaumer B."/>
            <person name="Paricio N."/>
            <person name="Paulin L."/>
            <person name="Perea J."/>
            <person name="Perez-Alonso M."/>
            <person name="Perez-Ortin J.E."/>
            <person name="Pohl T.M."/>
            <person name="Prydz H."/>
            <person name="Purnelle B."/>
            <person name="Rasmussen S.W."/>
            <person name="Remacha M.A."/>
            <person name="Revuelta J.L."/>
            <person name="Rieger M."/>
            <person name="Salom D."/>
            <person name="Saluz H.P."/>
            <person name="Saiz J.E."/>
            <person name="Saren A.-M."/>
            <person name="Schaefer M."/>
            <person name="Scharfe M."/>
            <person name="Schmidt E.R."/>
            <person name="Schneider C."/>
            <person name="Scholler P."/>
            <person name="Schwarz S."/>
            <person name="Soler-Mira A."/>
            <person name="Urrestarazu L.A."/>
            <person name="Verhasselt P."/>
            <person name="Vissers S."/>
            <person name="Voet M."/>
            <person name="Volckaert G."/>
            <person name="Wagner G."/>
            <person name="Wambutt R."/>
            <person name="Wedler E."/>
            <person name="Wedler H."/>
            <person name="Woelfl S."/>
            <person name="Harris D.E."/>
            <person name="Bowman S."/>
            <person name="Brown D."/>
            <person name="Churcher C.M."/>
            <person name="Connor R."/>
            <person name="Dedman K."/>
            <person name="Gentles S."/>
            <person name="Hamlin N."/>
            <person name="Hunt S."/>
            <person name="Jones L."/>
            <person name="McDonald S."/>
            <person name="Murphy L.D."/>
            <person name="Niblett D."/>
            <person name="Odell C."/>
            <person name="Oliver K."/>
            <person name="Rajandream M.A."/>
            <person name="Richards C."/>
            <person name="Shore L."/>
            <person name="Walsh S.V."/>
            <person name="Barrell B.G."/>
            <person name="Dietrich F.S."/>
            <person name="Mulligan J.T."/>
            <person name="Allen E."/>
            <person name="Araujo R."/>
            <person name="Aviles E."/>
            <person name="Berno A."/>
            <person name="Carpenter J."/>
            <person name="Chen E."/>
            <person name="Cherry J.M."/>
            <person name="Chung E."/>
            <person name="Duncan M."/>
            <person name="Hunicke-Smith S."/>
            <person name="Hyman R.W."/>
            <person name="Komp C."/>
            <person name="Lashkari D."/>
            <person name="Lew H."/>
            <person name="Lin D."/>
            <person name="Mosedale D."/>
            <person name="Nakahara K."/>
            <person name="Namath A."/>
            <person name="Oefner P."/>
            <person name="Oh C."/>
            <person name="Petel F.X."/>
            <person name="Roberts D."/>
            <person name="Schramm S."/>
            <person name="Schroeder M."/>
            <person name="Shogren T."/>
            <person name="Shroff N."/>
            <person name="Winant A."/>
            <person name="Yelton M.A."/>
            <person name="Botstein D."/>
            <person name="Davis R.W."/>
            <person name="Johnston M."/>
            <person name="Andrews S."/>
            <person name="Brinkman R."/>
            <person name="Cooper J."/>
            <person name="Ding H."/>
            <person name="Du Z."/>
            <person name="Favello A."/>
            <person name="Fulton L."/>
            <person name="Gattung S."/>
            <person name="Greco T."/>
            <person name="Hallsworth K."/>
            <person name="Hawkins J."/>
            <person name="Hillier L.W."/>
            <person name="Jier M."/>
            <person name="Johnson D."/>
            <person name="Johnston L."/>
            <person name="Kirsten J."/>
            <person name="Kucaba T."/>
            <person name="Langston Y."/>
            <person name="Latreille P."/>
            <person name="Le T."/>
            <person name="Mardis E."/>
            <person name="Menezes S."/>
            <person name="Miller N."/>
            <person name="Nhan M."/>
            <person name="Pauley A."/>
            <person name="Peluso D."/>
            <person name="Rifkin L."/>
            <person name="Riles L."/>
            <person name="Taich A."/>
            <person name="Trevaskis E."/>
            <person name="Vignati D."/>
            <person name="Wilcox L."/>
            <person name="Wohldman P."/>
            <person name="Vaudin M."/>
            <person name="Wilson R."/>
            <person name="Waterston R."/>
            <person name="Albermann K."/>
            <person name="Hani J."/>
            <person name="Heumann K."/>
            <person name="Kleine K."/>
            <person name="Mewes H.-W."/>
            <person name="Zollner A."/>
            <person name="Zaccaria P."/>
        </authorList>
    </citation>
    <scope>NUCLEOTIDE SEQUENCE [LARGE SCALE GENOMIC DNA]</scope>
    <source>
        <strain>ATCC 204508 / S288c</strain>
    </source>
</reference>
<reference key="2">
    <citation type="journal article" date="2014" name="G3 (Bethesda)">
        <title>The reference genome sequence of Saccharomyces cerevisiae: Then and now.</title>
        <authorList>
            <person name="Engel S.R."/>
            <person name="Dietrich F.S."/>
            <person name="Fisk D.G."/>
            <person name="Binkley G."/>
            <person name="Balakrishnan R."/>
            <person name="Costanzo M.C."/>
            <person name="Dwight S.S."/>
            <person name="Hitz B.C."/>
            <person name="Karra K."/>
            <person name="Nash R.S."/>
            <person name="Weng S."/>
            <person name="Wong E.D."/>
            <person name="Lloyd P."/>
            <person name="Skrzypek M.S."/>
            <person name="Miyasato S.R."/>
            <person name="Simison M."/>
            <person name="Cherry J.M."/>
        </authorList>
    </citation>
    <scope>GENOME REANNOTATION</scope>
    <source>
        <strain>ATCC 204508 / S288c</strain>
    </source>
</reference>
<reference key="3">
    <citation type="journal article" date="1999" name="Mol. Biol. Cell">
        <title>Erp1p and Erp2p, partners for Emp24p and Erv25p in a yeast p24 complex.</title>
        <authorList>
            <person name="Marzioch M."/>
            <person name="Henthorn D.C."/>
            <person name="Herrmann J.M."/>
            <person name="Wilson R."/>
            <person name="Thomas D.Y."/>
            <person name="Bergeron J.J.M."/>
            <person name="Solari R.C."/>
            <person name="Rowley A."/>
        </authorList>
    </citation>
    <scope>GENE NAME</scope>
</reference>
<reference key="4">
    <citation type="journal article" date="2003" name="Nature">
        <title>Global analysis of protein expression in yeast.</title>
        <authorList>
            <person name="Ghaemmaghami S."/>
            <person name="Huh W.-K."/>
            <person name="Bower K."/>
            <person name="Howson R.W."/>
            <person name="Belle A."/>
            <person name="Dephoure N."/>
            <person name="O'Shea E.K."/>
            <person name="Weissman J.S."/>
        </authorList>
    </citation>
    <scope>LEVEL OF PROTEIN EXPRESSION [LARGE SCALE ANALYSIS]</scope>
</reference>